<evidence type="ECO:0000250" key="1"/>
<evidence type="ECO:0000305" key="2"/>
<organism>
    <name type="scientific">Echinococcus multilocularis</name>
    <name type="common">Fox tapeworm</name>
    <dbReference type="NCBI Taxonomy" id="6211"/>
    <lineage>
        <taxon>Eukaryota</taxon>
        <taxon>Metazoa</taxon>
        <taxon>Spiralia</taxon>
        <taxon>Lophotrochozoa</taxon>
        <taxon>Platyhelminthes</taxon>
        <taxon>Cestoda</taxon>
        <taxon>Eucestoda</taxon>
        <taxon>Cyclophyllidea</taxon>
        <taxon>Taeniidae</taxon>
        <taxon>Echinococcus</taxon>
    </lineage>
</organism>
<sequence length="223" mass="24454">MESDRFDYLFKFLIIGNAGTGKTCILRRYTERKFFPNTQHTIGAEFGSRVISVDGTHVKIQIWDTAGQERFRSMARSYYHDAVGTLLVYDITNRTSFGAVEQWLGDARHLATPGVVVILVGNKKDLRDTDGQVTHWEANTFAQENGLQFIETSALTGENIDDAFTSCVRVLLSKVKSGELGADRLLVGSNKQHLQAVNLTASATSVSASQSSAATAHSDTCLC</sequence>
<keyword id="KW-1003">Cell membrane</keyword>
<keyword id="KW-0342">GTP-binding</keyword>
<keyword id="KW-0449">Lipoprotein</keyword>
<keyword id="KW-0472">Membrane</keyword>
<keyword id="KW-0488">Methylation</keyword>
<keyword id="KW-0547">Nucleotide-binding</keyword>
<keyword id="KW-0636">Prenylation</keyword>
<keyword id="KW-0653">Protein transport</keyword>
<keyword id="KW-0813">Transport</keyword>
<dbReference type="EMBL" id="AJ292375">
    <property type="protein sequence ID" value="CAC18549.1"/>
    <property type="molecule type" value="mRNA"/>
</dbReference>
<dbReference type="SMR" id="Q9GP33"/>
<dbReference type="eggNOG" id="KOG0086">
    <property type="taxonomic scope" value="Eukaryota"/>
</dbReference>
<dbReference type="GO" id="GO:0005886">
    <property type="term" value="C:plasma membrane"/>
    <property type="evidence" value="ECO:0007669"/>
    <property type="project" value="UniProtKB-SubCell"/>
</dbReference>
<dbReference type="GO" id="GO:0005525">
    <property type="term" value="F:GTP binding"/>
    <property type="evidence" value="ECO:0007669"/>
    <property type="project" value="UniProtKB-KW"/>
</dbReference>
<dbReference type="GO" id="GO:0003924">
    <property type="term" value="F:GTPase activity"/>
    <property type="evidence" value="ECO:0007669"/>
    <property type="project" value="InterPro"/>
</dbReference>
<dbReference type="GO" id="GO:0015031">
    <property type="term" value="P:protein transport"/>
    <property type="evidence" value="ECO:0007669"/>
    <property type="project" value="UniProtKB-KW"/>
</dbReference>
<dbReference type="FunFam" id="3.40.50.300:FF:001072">
    <property type="entry name" value="Rab family GTPase"/>
    <property type="match status" value="1"/>
</dbReference>
<dbReference type="Gene3D" id="3.40.50.300">
    <property type="entry name" value="P-loop containing nucleotide triphosphate hydrolases"/>
    <property type="match status" value="1"/>
</dbReference>
<dbReference type="InterPro" id="IPR027417">
    <property type="entry name" value="P-loop_NTPase"/>
</dbReference>
<dbReference type="InterPro" id="IPR050209">
    <property type="entry name" value="Rab_GTPases_membrane_traffic"/>
</dbReference>
<dbReference type="InterPro" id="IPR005225">
    <property type="entry name" value="Small_GTP-bd"/>
</dbReference>
<dbReference type="InterPro" id="IPR001806">
    <property type="entry name" value="Small_GTPase"/>
</dbReference>
<dbReference type="NCBIfam" id="TIGR00231">
    <property type="entry name" value="small_GTP"/>
    <property type="match status" value="1"/>
</dbReference>
<dbReference type="PANTHER" id="PTHR47979">
    <property type="entry name" value="DRAB11-RELATED"/>
    <property type="match status" value="1"/>
</dbReference>
<dbReference type="Pfam" id="PF00071">
    <property type="entry name" value="Ras"/>
    <property type="match status" value="1"/>
</dbReference>
<dbReference type="PRINTS" id="PR00449">
    <property type="entry name" value="RASTRNSFRMNG"/>
</dbReference>
<dbReference type="SMART" id="SM00175">
    <property type="entry name" value="RAB"/>
    <property type="match status" value="1"/>
</dbReference>
<dbReference type="SMART" id="SM00176">
    <property type="entry name" value="RAN"/>
    <property type="match status" value="1"/>
</dbReference>
<dbReference type="SMART" id="SM00173">
    <property type="entry name" value="RAS"/>
    <property type="match status" value="1"/>
</dbReference>
<dbReference type="SMART" id="SM00174">
    <property type="entry name" value="RHO"/>
    <property type="match status" value="1"/>
</dbReference>
<dbReference type="SUPFAM" id="SSF52540">
    <property type="entry name" value="P-loop containing nucleoside triphosphate hydrolases"/>
    <property type="match status" value="1"/>
</dbReference>
<dbReference type="PROSITE" id="PS51419">
    <property type="entry name" value="RAB"/>
    <property type="match status" value="1"/>
</dbReference>
<proteinExistence type="evidence at transcript level"/>
<protein>
    <recommendedName>
        <fullName>Probable Ras-related protein Rab-4A</fullName>
    </recommendedName>
</protein>
<accession>Q9GP33</accession>
<comment type="function">
    <text evidence="1">Protein transport. Probably involved in vesicular traffic (By similarity).</text>
</comment>
<comment type="subcellular location">
    <subcellularLocation>
        <location evidence="2">Cell membrane</location>
        <topology evidence="2">Lipid-anchor</topology>
        <orientation evidence="2">Cytoplasmic side</orientation>
    </subcellularLocation>
</comment>
<comment type="similarity">
    <text evidence="2">Belongs to the small GTPase superfamily. Rab family.</text>
</comment>
<name>RAB4A_ECHMU</name>
<feature type="chain" id="PRO_0000121097" description="Probable Ras-related protein Rab-4A">
    <location>
        <begin position="1"/>
        <end position="223"/>
    </location>
</feature>
<feature type="short sequence motif" description="Effector region" evidence="1">
    <location>
        <begin position="38"/>
        <end position="46"/>
    </location>
</feature>
<feature type="binding site" evidence="1">
    <location>
        <begin position="16"/>
        <end position="23"/>
    </location>
    <ligand>
        <name>GTP</name>
        <dbReference type="ChEBI" id="CHEBI:37565"/>
    </ligand>
</feature>
<feature type="binding site" evidence="1">
    <location>
        <begin position="64"/>
        <end position="68"/>
    </location>
    <ligand>
        <name>GTP</name>
        <dbReference type="ChEBI" id="CHEBI:37565"/>
    </ligand>
</feature>
<feature type="binding site" evidence="1">
    <location>
        <begin position="122"/>
        <end position="125"/>
    </location>
    <ligand>
        <name>GTP</name>
        <dbReference type="ChEBI" id="CHEBI:37565"/>
    </ligand>
</feature>
<feature type="modified residue" description="Cysteine methyl ester" evidence="1">
    <location>
        <position position="223"/>
    </location>
</feature>
<feature type="lipid moiety-binding region" description="S-geranylgeranyl cysteine" evidence="1">
    <location>
        <position position="221"/>
    </location>
</feature>
<feature type="lipid moiety-binding region" description="S-geranylgeranyl cysteine" evidence="1">
    <location>
        <position position="223"/>
    </location>
</feature>
<reference key="1">
    <citation type="journal article" date="2000" name="J. Biol. Chem.">
        <title>mRNA trans-splicing in the human parasitic cestode Echinococcus multilocularis.</title>
        <authorList>
            <person name="Brehm K."/>
            <person name="Jensen K."/>
            <person name="Frosch M."/>
        </authorList>
    </citation>
    <scope>NUCLEOTIDE SEQUENCE [MRNA]</scope>
    <source>
        <strain>H-95</strain>
    </source>
</reference>